<dbReference type="EMBL" id="CP000783">
    <property type="protein sequence ID" value="ABU79579.1"/>
    <property type="molecule type" value="Genomic_DNA"/>
</dbReference>
<dbReference type="RefSeq" id="WP_001138042.1">
    <property type="nucleotide sequence ID" value="NC_009778.1"/>
</dbReference>
<dbReference type="SMR" id="A7MKJ3"/>
<dbReference type="GeneID" id="92804583"/>
<dbReference type="KEGG" id="esa:ESA_04400"/>
<dbReference type="HOGENOM" id="CLU_072226_1_1_6"/>
<dbReference type="Proteomes" id="UP000000260">
    <property type="component" value="Chromosome"/>
</dbReference>
<dbReference type="GO" id="GO:0015935">
    <property type="term" value="C:small ribosomal subunit"/>
    <property type="evidence" value="ECO:0007669"/>
    <property type="project" value="InterPro"/>
</dbReference>
<dbReference type="GO" id="GO:0019843">
    <property type="term" value="F:rRNA binding"/>
    <property type="evidence" value="ECO:0007669"/>
    <property type="project" value="UniProtKB-UniRule"/>
</dbReference>
<dbReference type="GO" id="GO:0003735">
    <property type="term" value="F:structural constituent of ribosome"/>
    <property type="evidence" value="ECO:0007669"/>
    <property type="project" value="InterPro"/>
</dbReference>
<dbReference type="GO" id="GO:0000049">
    <property type="term" value="F:tRNA binding"/>
    <property type="evidence" value="ECO:0007669"/>
    <property type="project" value="UniProtKB-UniRule"/>
</dbReference>
<dbReference type="GO" id="GO:0006412">
    <property type="term" value="P:translation"/>
    <property type="evidence" value="ECO:0007669"/>
    <property type="project" value="UniProtKB-UniRule"/>
</dbReference>
<dbReference type="CDD" id="cd14869">
    <property type="entry name" value="uS7_Bacteria"/>
    <property type="match status" value="1"/>
</dbReference>
<dbReference type="FunFam" id="1.10.455.10:FF:000001">
    <property type="entry name" value="30S ribosomal protein S7"/>
    <property type="match status" value="1"/>
</dbReference>
<dbReference type="Gene3D" id="1.10.455.10">
    <property type="entry name" value="Ribosomal protein S7 domain"/>
    <property type="match status" value="1"/>
</dbReference>
<dbReference type="HAMAP" id="MF_00480_B">
    <property type="entry name" value="Ribosomal_uS7_B"/>
    <property type="match status" value="1"/>
</dbReference>
<dbReference type="InterPro" id="IPR000235">
    <property type="entry name" value="Ribosomal_uS7"/>
</dbReference>
<dbReference type="InterPro" id="IPR005717">
    <property type="entry name" value="Ribosomal_uS7_bac/org-type"/>
</dbReference>
<dbReference type="InterPro" id="IPR020606">
    <property type="entry name" value="Ribosomal_uS7_CS"/>
</dbReference>
<dbReference type="InterPro" id="IPR023798">
    <property type="entry name" value="Ribosomal_uS7_dom"/>
</dbReference>
<dbReference type="InterPro" id="IPR036823">
    <property type="entry name" value="Ribosomal_uS7_dom_sf"/>
</dbReference>
<dbReference type="NCBIfam" id="TIGR01029">
    <property type="entry name" value="rpsG_bact"/>
    <property type="match status" value="1"/>
</dbReference>
<dbReference type="PANTHER" id="PTHR11205">
    <property type="entry name" value="RIBOSOMAL PROTEIN S7"/>
    <property type="match status" value="1"/>
</dbReference>
<dbReference type="Pfam" id="PF00177">
    <property type="entry name" value="Ribosomal_S7"/>
    <property type="match status" value="1"/>
</dbReference>
<dbReference type="PIRSF" id="PIRSF002122">
    <property type="entry name" value="RPS7p_RPS7a_RPS5e_RPS7o"/>
    <property type="match status" value="1"/>
</dbReference>
<dbReference type="SUPFAM" id="SSF47973">
    <property type="entry name" value="Ribosomal protein S7"/>
    <property type="match status" value="1"/>
</dbReference>
<dbReference type="PROSITE" id="PS00052">
    <property type="entry name" value="RIBOSOMAL_S7"/>
    <property type="match status" value="1"/>
</dbReference>
<keyword id="KW-1185">Reference proteome</keyword>
<keyword id="KW-0687">Ribonucleoprotein</keyword>
<keyword id="KW-0689">Ribosomal protein</keyword>
<keyword id="KW-0694">RNA-binding</keyword>
<keyword id="KW-0699">rRNA-binding</keyword>
<keyword id="KW-0820">tRNA-binding</keyword>
<name>RS7_CROS8</name>
<reference key="1">
    <citation type="journal article" date="2010" name="PLoS ONE">
        <title>Genome sequence of Cronobacter sakazakii BAA-894 and comparative genomic hybridization analysis with other Cronobacter species.</title>
        <authorList>
            <person name="Kucerova E."/>
            <person name="Clifton S.W."/>
            <person name="Xia X.Q."/>
            <person name="Long F."/>
            <person name="Porwollik S."/>
            <person name="Fulton L."/>
            <person name="Fronick C."/>
            <person name="Minx P."/>
            <person name="Kyung K."/>
            <person name="Warren W."/>
            <person name="Fulton R."/>
            <person name="Feng D."/>
            <person name="Wollam A."/>
            <person name="Shah N."/>
            <person name="Bhonagiri V."/>
            <person name="Nash W.E."/>
            <person name="Hallsworth-Pepin K."/>
            <person name="Wilson R.K."/>
            <person name="McClelland M."/>
            <person name="Forsythe S.J."/>
        </authorList>
    </citation>
    <scope>NUCLEOTIDE SEQUENCE [LARGE SCALE GENOMIC DNA]</scope>
    <source>
        <strain>ATCC BAA-894</strain>
    </source>
</reference>
<organism>
    <name type="scientific">Cronobacter sakazakii (strain ATCC BAA-894)</name>
    <name type="common">Enterobacter sakazakii</name>
    <dbReference type="NCBI Taxonomy" id="290339"/>
    <lineage>
        <taxon>Bacteria</taxon>
        <taxon>Pseudomonadati</taxon>
        <taxon>Pseudomonadota</taxon>
        <taxon>Gammaproteobacteria</taxon>
        <taxon>Enterobacterales</taxon>
        <taxon>Enterobacteriaceae</taxon>
        <taxon>Cronobacter</taxon>
    </lineage>
</organism>
<feature type="chain" id="PRO_1000014190" description="Small ribosomal subunit protein uS7">
    <location>
        <begin position="1"/>
        <end position="156"/>
    </location>
</feature>
<proteinExistence type="inferred from homology"/>
<comment type="function">
    <text evidence="1">One of the primary rRNA binding proteins, it binds directly to 16S rRNA where it nucleates assembly of the head domain of the 30S subunit. Is located at the subunit interface close to the decoding center, probably blocks exit of the E-site tRNA.</text>
</comment>
<comment type="subunit">
    <text evidence="1">Part of the 30S ribosomal subunit. Contacts proteins S9 and S11.</text>
</comment>
<comment type="similarity">
    <text evidence="1">Belongs to the universal ribosomal protein uS7 family.</text>
</comment>
<gene>
    <name evidence="1" type="primary">rpsG</name>
    <name type="ordered locus">ESA_04400</name>
</gene>
<sequence length="156" mass="17590">MPRRRVIGQRKILPDPKFGSELLAKFVNILMVDGKKSTAESIVYSALETLAQRSGKSELEAFEVALENVRPTVEVKSRRVGGSTYQVPVEVRPVRRNALAMRWIVEAARKRGDKSMALRLANELSDAADNKGTAVKKREDVHRMAEANKAFAHYRW</sequence>
<protein>
    <recommendedName>
        <fullName evidence="1">Small ribosomal subunit protein uS7</fullName>
    </recommendedName>
    <alternativeName>
        <fullName evidence="2">30S ribosomal protein S7</fullName>
    </alternativeName>
</protein>
<accession>A7MKJ3</accession>
<evidence type="ECO:0000255" key="1">
    <source>
        <dbReference type="HAMAP-Rule" id="MF_00480"/>
    </source>
</evidence>
<evidence type="ECO:0000305" key="2"/>